<sequence length="93" mass="10161">MYTIDLILRHVPMPVSIERKESAAAMAVYQQIQQAMASGTPTFLELTCDRQVGKKLTVLTSEIVAVQMADKDAPSSTISRGGFFAQLVQQTSN</sequence>
<comment type="similarity">
    <text evidence="1">Belongs to the UPF0367 family.</text>
</comment>
<organism>
    <name type="scientific">Thermosynechococcus vestitus (strain NIES-2133 / IAM M-273 / BP-1)</name>
    <dbReference type="NCBI Taxonomy" id="197221"/>
    <lineage>
        <taxon>Bacteria</taxon>
        <taxon>Bacillati</taxon>
        <taxon>Cyanobacteriota</taxon>
        <taxon>Cyanophyceae</taxon>
        <taxon>Acaryochloridales</taxon>
        <taxon>Thermosynechococcaceae</taxon>
        <taxon>Thermosynechococcus</taxon>
    </lineage>
</organism>
<proteinExistence type="inferred from homology"/>
<name>Y804_THEVB</name>
<dbReference type="EMBL" id="BA000039">
    <property type="protein sequence ID" value="BAC08355.1"/>
    <property type="molecule type" value="Genomic_DNA"/>
</dbReference>
<dbReference type="RefSeq" id="NP_681593.1">
    <property type="nucleotide sequence ID" value="NC_004113.1"/>
</dbReference>
<dbReference type="RefSeq" id="WP_011056647.1">
    <property type="nucleotide sequence ID" value="NC_004113.1"/>
</dbReference>
<dbReference type="STRING" id="197221.gene:10747395"/>
<dbReference type="EnsemblBacteria" id="BAC08355">
    <property type="protein sequence ID" value="BAC08355"/>
    <property type="gene ID" value="BAC08355"/>
</dbReference>
<dbReference type="KEGG" id="tel:tsr0804"/>
<dbReference type="eggNOG" id="ENOG5032YB3">
    <property type="taxonomic scope" value="Bacteria"/>
</dbReference>
<dbReference type="Proteomes" id="UP000000440">
    <property type="component" value="Chromosome"/>
</dbReference>
<dbReference type="HAMAP" id="MF_01360">
    <property type="entry name" value="UPF0367"/>
    <property type="match status" value="1"/>
</dbReference>
<dbReference type="InterPro" id="IPR020885">
    <property type="entry name" value="UPF0367"/>
</dbReference>
<dbReference type="NCBIfam" id="NF010236">
    <property type="entry name" value="PRK13683.1"/>
    <property type="match status" value="1"/>
</dbReference>
<gene>
    <name type="ordered locus">tsr0804</name>
</gene>
<reference key="1">
    <citation type="journal article" date="2002" name="DNA Res.">
        <title>Complete genome structure of the thermophilic cyanobacterium Thermosynechococcus elongatus BP-1.</title>
        <authorList>
            <person name="Nakamura Y."/>
            <person name="Kaneko T."/>
            <person name="Sato S."/>
            <person name="Ikeuchi M."/>
            <person name="Katoh H."/>
            <person name="Sasamoto S."/>
            <person name="Watanabe A."/>
            <person name="Iriguchi M."/>
            <person name="Kawashima K."/>
            <person name="Kimura T."/>
            <person name="Kishida Y."/>
            <person name="Kiyokawa C."/>
            <person name="Kohara M."/>
            <person name="Matsumoto M."/>
            <person name="Matsuno A."/>
            <person name="Nakazaki N."/>
            <person name="Shimpo S."/>
            <person name="Sugimoto M."/>
            <person name="Takeuchi C."/>
            <person name="Yamada M."/>
            <person name="Tabata S."/>
        </authorList>
    </citation>
    <scope>NUCLEOTIDE SEQUENCE [LARGE SCALE GENOMIC DNA]</scope>
    <source>
        <strain>NIES-2133 / IAM M-273 / BP-1</strain>
    </source>
</reference>
<protein>
    <recommendedName>
        <fullName evidence="1">UPF0367 protein tsr0804</fullName>
    </recommendedName>
</protein>
<evidence type="ECO:0000255" key="1">
    <source>
        <dbReference type="HAMAP-Rule" id="MF_01360"/>
    </source>
</evidence>
<feature type="chain" id="PRO_0000240499" description="UPF0367 protein tsr0804">
    <location>
        <begin position="1"/>
        <end position="93"/>
    </location>
</feature>
<keyword id="KW-1185">Reference proteome</keyword>
<accession>Q8DKQ5</accession>